<protein>
    <recommendedName>
        <fullName>NADH-ubiquinone oxidoreductase chain 6</fullName>
        <ecNumber evidence="1">7.1.1.2</ecNumber>
    </recommendedName>
    <alternativeName>
        <fullName>NADH dehydrogenase subunit 6</fullName>
    </alternativeName>
</protein>
<sequence>MIYMVSVSMMVLVLGLVAVASNPSPFYAALGLVLAAGAGCLVIVSFGSSFLSIVLFLIYLGGMLVVFAYSAARAKPYPEAWGSWSVVFYVLVYLIGVLVWYLFLGGVEVDGMNKSSELGSYVMRGDWVGVALMYSCWWVIIVYWWVSIIINFVCGIWVNSKSMWWESSCV</sequence>
<organism>
    <name type="scientific">Xenopus laevis</name>
    <name type="common">African clawed frog</name>
    <dbReference type="NCBI Taxonomy" id="8355"/>
    <lineage>
        <taxon>Eukaryota</taxon>
        <taxon>Metazoa</taxon>
        <taxon>Chordata</taxon>
        <taxon>Craniata</taxon>
        <taxon>Vertebrata</taxon>
        <taxon>Euteleostomi</taxon>
        <taxon>Amphibia</taxon>
        <taxon>Batrachia</taxon>
        <taxon>Anura</taxon>
        <taxon>Pipoidea</taxon>
        <taxon>Pipidae</taxon>
        <taxon>Xenopodinae</taxon>
        <taxon>Xenopus</taxon>
        <taxon>Xenopus</taxon>
    </lineage>
</organism>
<name>NU6M_XENLA</name>
<feature type="chain" id="PRO_0000118348" description="NADH-ubiquinone oxidoreductase chain 6">
    <location>
        <begin position="1"/>
        <end position="170"/>
    </location>
</feature>
<feature type="transmembrane region" description="Helical" evidence="3">
    <location>
        <begin position="1"/>
        <end position="21"/>
    </location>
</feature>
<feature type="transmembrane region" description="Helical" evidence="3">
    <location>
        <begin position="26"/>
        <end position="46"/>
    </location>
</feature>
<feature type="transmembrane region" description="Helical" evidence="3">
    <location>
        <begin position="49"/>
        <end position="69"/>
    </location>
</feature>
<feature type="transmembrane region" description="Helical" evidence="3">
    <location>
        <begin position="86"/>
        <end position="106"/>
    </location>
</feature>
<feature type="transmembrane region" description="Helical" evidence="3">
    <location>
        <begin position="138"/>
        <end position="158"/>
    </location>
</feature>
<accession>P03927</accession>
<gene>
    <name type="primary">mt-nd6</name>
    <name type="synonym">mtnd6</name>
    <name type="synonym">nadh6</name>
    <name type="synonym">nd6</name>
</gene>
<keyword id="KW-0249">Electron transport</keyword>
<keyword id="KW-0472">Membrane</keyword>
<keyword id="KW-0496">Mitochondrion</keyword>
<keyword id="KW-0999">Mitochondrion inner membrane</keyword>
<keyword id="KW-0520">NAD</keyword>
<keyword id="KW-1185">Reference proteome</keyword>
<keyword id="KW-0679">Respiratory chain</keyword>
<keyword id="KW-1278">Translocase</keyword>
<keyword id="KW-0812">Transmembrane</keyword>
<keyword id="KW-1133">Transmembrane helix</keyword>
<keyword id="KW-0813">Transport</keyword>
<keyword id="KW-0830">Ubiquinone</keyword>
<reference key="1">
    <citation type="journal article" date="1985" name="J. Biol. Chem.">
        <title>The complete nucleotide sequence of the Xenopus laevis mitochondrial genome.</title>
        <authorList>
            <person name="Roe B.A."/>
            <person name="Ma D.-P."/>
            <person name="Wilson R.K."/>
            <person name="Wong J.F.-H."/>
        </authorList>
    </citation>
    <scope>NUCLEOTIDE SEQUENCE [GENOMIC DNA]</scope>
</reference>
<proteinExistence type="inferred from homology"/>
<comment type="function">
    <text evidence="1">Core subunit of the mitochondrial membrane respiratory chain NADH dehydrogenase (Complex I) which catalyzes electron transfer from NADH through the respiratory chain, using ubiquinone as an electron acceptor. Essential for the catalytic activity and assembly of complex I.</text>
</comment>
<comment type="catalytic activity">
    <reaction evidence="1">
        <text>a ubiquinone + NADH + 5 H(+)(in) = a ubiquinol + NAD(+) + 4 H(+)(out)</text>
        <dbReference type="Rhea" id="RHEA:29091"/>
        <dbReference type="Rhea" id="RHEA-COMP:9565"/>
        <dbReference type="Rhea" id="RHEA-COMP:9566"/>
        <dbReference type="ChEBI" id="CHEBI:15378"/>
        <dbReference type="ChEBI" id="CHEBI:16389"/>
        <dbReference type="ChEBI" id="CHEBI:17976"/>
        <dbReference type="ChEBI" id="CHEBI:57540"/>
        <dbReference type="ChEBI" id="CHEBI:57945"/>
        <dbReference type="EC" id="7.1.1.2"/>
    </reaction>
</comment>
<comment type="subunit">
    <text evidence="2">Core subunit of respiratory chain NADH dehydrogenase (Complex I) which is composed of 45 different subunits.</text>
</comment>
<comment type="subcellular location">
    <subcellularLocation>
        <location evidence="2">Mitochondrion inner membrane</location>
        <topology evidence="3">Multi-pass membrane protein</topology>
    </subcellularLocation>
</comment>
<comment type="similarity">
    <text evidence="4">Belongs to the complex I subunit 6 family.</text>
</comment>
<evidence type="ECO:0000250" key="1">
    <source>
        <dbReference type="UniProtKB" id="P03923"/>
    </source>
</evidence>
<evidence type="ECO:0000250" key="2">
    <source>
        <dbReference type="UniProtKB" id="P03924"/>
    </source>
</evidence>
<evidence type="ECO:0000255" key="3"/>
<evidence type="ECO:0000305" key="4"/>
<dbReference type="EC" id="7.1.1.2" evidence="1"/>
<dbReference type="EMBL" id="M10217">
    <property type="protein sequence ID" value="AAA66469.1"/>
    <property type="molecule type" value="Genomic_DNA"/>
</dbReference>
<dbReference type="PIR" id="A00459">
    <property type="entry name" value="DEXLN6"/>
</dbReference>
<dbReference type="RefSeq" id="NP_008145.1">
    <property type="nucleotide sequence ID" value="NC_001573.1"/>
</dbReference>
<dbReference type="SMR" id="P03927"/>
<dbReference type="GeneID" id="2642079"/>
<dbReference type="KEGG" id="xla:2642079"/>
<dbReference type="CTD" id="4541"/>
<dbReference type="OrthoDB" id="9837654at2759"/>
<dbReference type="Proteomes" id="UP000186698">
    <property type="component" value="Mitochondrion MT"/>
</dbReference>
<dbReference type="Bgee" id="2642079">
    <property type="expression patterns" value="Expressed in blastula and 19 other cell types or tissues"/>
</dbReference>
<dbReference type="GO" id="GO:0005743">
    <property type="term" value="C:mitochondrial inner membrane"/>
    <property type="evidence" value="ECO:0000250"/>
    <property type="project" value="UniProtKB"/>
</dbReference>
<dbReference type="GO" id="GO:0005739">
    <property type="term" value="C:mitochondrion"/>
    <property type="evidence" value="ECO:0000318"/>
    <property type="project" value="GO_Central"/>
</dbReference>
<dbReference type="GO" id="GO:0008137">
    <property type="term" value="F:NADH dehydrogenase (ubiquinone) activity"/>
    <property type="evidence" value="ECO:0000250"/>
    <property type="project" value="UniProtKB"/>
</dbReference>
<dbReference type="GO" id="GO:0006120">
    <property type="term" value="P:mitochondrial electron transport, NADH to ubiquinone"/>
    <property type="evidence" value="ECO:0000250"/>
    <property type="project" value="UniProtKB"/>
</dbReference>
<dbReference type="GO" id="GO:0032981">
    <property type="term" value="P:mitochondrial respiratory chain complex I assembly"/>
    <property type="evidence" value="ECO:0000250"/>
    <property type="project" value="UniProtKB"/>
</dbReference>
<dbReference type="Gene3D" id="1.20.120.1200">
    <property type="entry name" value="NADH-ubiquinone/plastoquinone oxidoreductase chain 6, subunit NuoJ"/>
    <property type="match status" value="1"/>
</dbReference>
<dbReference type="InterPro" id="IPR050269">
    <property type="entry name" value="ComplexI_Subunit6"/>
</dbReference>
<dbReference type="InterPro" id="IPR001457">
    <property type="entry name" value="NADH_UbQ/plastoQ_OxRdtase_su6"/>
</dbReference>
<dbReference type="InterPro" id="IPR042106">
    <property type="entry name" value="Nuo/plastoQ_OxRdtase_6_NuoJ"/>
</dbReference>
<dbReference type="PANTHER" id="PTHR11435">
    <property type="entry name" value="NADH UBIQUINONE OXIDOREDUCTASE SUBUNIT ND6"/>
    <property type="match status" value="1"/>
</dbReference>
<dbReference type="PANTHER" id="PTHR11435:SF1">
    <property type="entry name" value="NADH-UBIQUINONE OXIDOREDUCTASE CHAIN 6"/>
    <property type="match status" value="1"/>
</dbReference>
<dbReference type="Pfam" id="PF00499">
    <property type="entry name" value="Oxidored_q3"/>
    <property type="match status" value="1"/>
</dbReference>
<geneLocation type="mitochondrion"/>